<gene>
    <name evidence="1 5" type="primary">metXA</name>
    <name evidence="4" type="synonym">met2</name>
    <name type="ordered locus">TT_C0407</name>
</gene>
<comment type="function">
    <text evidence="1 3 7">Transfers an acetyl group from acetyl-CoA to L-homoserine, forming acetyl-L-homoserine.</text>
</comment>
<comment type="catalytic activity">
    <reaction evidence="1 3">
        <text>L-homoserine + acetyl-CoA = O-acetyl-L-homoserine + CoA</text>
        <dbReference type="Rhea" id="RHEA:13701"/>
        <dbReference type="ChEBI" id="CHEBI:57287"/>
        <dbReference type="ChEBI" id="CHEBI:57288"/>
        <dbReference type="ChEBI" id="CHEBI:57476"/>
        <dbReference type="ChEBI" id="CHEBI:57716"/>
        <dbReference type="EC" id="2.3.1.31"/>
    </reaction>
</comment>
<comment type="pathway">
    <text evidence="1 2">Amino-acid biosynthesis; L-methionine biosynthesis via de novo pathway; O-acetyl-L-homoserine from L-homoserine: step 1/1.</text>
</comment>
<comment type="subunit">
    <text evidence="1">Homodimer.</text>
</comment>
<comment type="subcellular location">
    <subcellularLocation>
        <location evidence="1">Cytoplasm</location>
    </subcellularLocation>
</comment>
<comment type="disruption phenotype">
    <text evidence="2">Methionine auxotroph.</text>
</comment>
<comment type="similarity">
    <text evidence="1">Belongs to the AB hydrolase superfamily. MetX family.</text>
</comment>
<sequence length="380" mass="42251">MSEIALEAWGEHEALLLKPPRSPLSIPPPKPRTAVLFPRREGFYTELGGYLPEVRLRFETYGTLSRRRDNAVLVFHALTGSAHLAGTYDEETFRSLSPLEQAFGREGWWDSLVGPGRILDPALYYVVSANHLGSCYGSTGPLSLDPHTGRPYGRDFPPLTIRDLARAQARLLDHLGVEKAIVIGGSLGGMVALEFALMYPERVKKLVVLAAPARHGPWARAFNHLSRQAILQDPEYQKGNPAPKGMALARGIAMMSYRAPEGFEARWGAEPELGETYLDYQGEKFLRRFHAESYLVLSRAMDTHDVGRGRGGVEEALKRLRAIPSLFVGIDTDLLYPAWEVRQAAKAAGARYREIKSPHGHDAFLIETDQVEEILDAFLP</sequence>
<proteinExistence type="evidence at protein level"/>
<name>METXA_THET2</name>
<dbReference type="EC" id="2.3.1.31" evidence="1 3"/>
<dbReference type="EMBL" id="AB029372">
    <property type="protein sequence ID" value="BAA88676.1"/>
    <property type="molecule type" value="Genomic_DNA"/>
</dbReference>
<dbReference type="EMBL" id="AE017221">
    <property type="protein sequence ID" value="AAS80755.1"/>
    <property type="molecule type" value="Genomic_DNA"/>
</dbReference>
<dbReference type="RefSeq" id="WP_011172855.1">
    <property type="nucleotide sequence ID" value="NC_005835.1"/>
</dbReference>
<dbReference type="SMR" id="Q9RA51"/>
<dbReference type="ESTHER" id="theth-metx">
    <property type="family name" value="Homoserine_transacetylase"/>
</dbReference>
<dbReference type="KEGG" id="tth:TT_C0407"/>
<dbReference type="eggNOG" id="COG2021">
    <property type="taxonomic scope" value="Bacteria"/>
</dbReference>
<dbReference type="HOGENOM" id="CLU_028760_1_2_0"/>
<dbReference type="OrthoDB" id="9800754at2"/>
<dbReference type="UniPathway" id="UPA00051">
    <property type="reaction ID" value="UER00074"/>
</dbReference>
<dbReference type="Proteomes" id="UP000000592">
    <property type="component" value="Chromosome"/>
</dbReference>
<dbReference type="GO" id="GO:0005737">
    <property type="term" value="C:cytoplasm"/>
    <property type="evidence" value="ECO:0007669"/>
    <property type="project" value="UniProtKB-SubCell"/>
</dbReference>
<dbReference type="GO" id="GO:0004414">
    <property type="term" value="F:homoserine O-acetyltransferase activity"/>
    <property type="evidence" value="ECO:0007669"/>
    <property type="project" value="UniProtKB-UniRule"/>
</dbReference>
<dbReference type="GO" id="GO:0009092">
    <property type="term" value="P:homoserine metabolic process"/>
    <property type="evidence" value="ECO:0007669"/>
    <property type="project" value="TreeGrafter"/>
</dbReference>
<dbReference type="GO" id="GO:0009086">
    <property type="term" value="P:methionine biosynthetic process"/>
    <property type="evidence" value="ECO:0007669"/>
    <property type="project" value="UniProtKB-UniRule"/>
</dbReference>
<dbReference type="Gene3D" id="3.40.50.1820">
    <property type="entry name" value="alpha/beta hydrolase"/>
    <property type="match status" value="1"/>
</dbReference>
<dbReference type="HAMAP" id="MF_00296">
    <property type="entry name" value="MetX_acyltransf"/>
    <property type="match status" value="1"/>
</dbReference>
<dbReference type="InterPro" id="IPR000073">
    <property type="entry name" value="AB_hydrolase_1"/>
</dbReference>
<dbReference type="InterPro" id="IPR029058">
    <property type="entry name" value="AB_hydrolase_fold"/>
</dbReference>
<dbReference type="InterPro" id="IPR008220">
    <property type="entry name" value="HAT_MetX-like"/>
</dbReference>
<dbReference type="NCBIfam" id="TIGR01392">
    <property type="entry name" value="homoserO_Ac_trn"/>
    <property type="match status" value="1"/>
</dbReference>
<dbReference type="NCBIfam" id="NF001209">
    <property type="entry name" value="PRK00175.1"/>
    <property type="match status" value="1"/>
</dbReference>
<dbReference type="PANTHER" id="PTHR32268">
    <property type="entry name" value="HOMOSERINE O-ACETYLTRANSFERASE"/>
    <property type="match status" value="1"/>
</dbReference>
<dbReference type="PANTHER" id="PTHR32268:SF11">
    <property type="entry name" value="HOMOSERINE O-ACETYLTRANSFERASE"/>
    <property type="match status" value="1"/>
</dbReference>
<dbReference type="Pfam" id="PF00561">
    <property type="entry name" value="Abhydrolase_1"/>
    <property type="match status" value="1"/>
</dbReference>
<dbReference type="PIRSF" id="PIRSF000443">
    <property type="entry name" value="Homoser_Ac_trans"/>
    <property type="match status" value="1"/>
</dbReference>
<dbReference type="PRINTS" id="PR00111">
    <property type="entry name" value="ABHYDROLASE"/>
</dbReference>
<dbReference type="SUPFAM" id="SSF53474">
    <property type="entry name" value="alpha/beta-Hydrolases"/>
    <property type="match status" value="1"/>
</dbReference>
<accession>Q9RA51</accession>
<evidence type="ECO:0000255" key="1">
    <source>
        <dbReference type="HAMAP-Rule" id="MF_00296"/>
    </source>
</evidence>
<evidence type="ECO:0000269" key="2">
    <source>
    </source>
</evidence>
<evidence type="ECO:0000269" key="3">
    <source>
    </source>
</evidence>
<evidence type="ECO:0000303" key="4">
    <source>
    </source>
</evidence>
<evidence type="ECO:0000303" key="5">
    <source>
    </source>
</evidence>
<evidence type="ECO:0000305" key="6"/>
<evidence type="ECO:0000305" key="7">
    <source>
    </source>
</evidence>
<reference key="1">
    <citation type="journal article" date="2000" name="J. Biosci. Bioeng.">
        <title>Analysis of the methionine biosynthetic pathway in the extremely thermophilic eubacterium Thermus thermophilus.</title>
        <authorList>
            <person name="Kosuge T."/>
            <person name="Gao D."/>
            <person name="Hoshino T."/>
        </authorList>
    </citation>
    <scope>NUCLEOTIDE SEQUENCE [GENOMIC DNA]</scope>
    <scope>FUNCTION</scope>
    <scope>PATHWAY</scope>
    <scope>DISRUPTION PHENOTYPE</scope>
    <source>
        <strain>ATCC BAA-163 / DSM 7039 / HB27</strain>
    </source>
</reference>
<reference key="2">
    <citation type="journal article" date="2004" name="Nat. Biotechnol.">
        <title>The genome sequence of the extreme thermophile Thermus thermophilus.</title>
        <authorList>
            <person name="Henne A."/>
            <person name="Brueggemann H."/>
            <person name="Raasch C."/>
            <person name="Wiezer A."/>
            <person name="Hartsch T."/>
            <person name="Liesegang H."/>
            <person name="Johann A."/>
            <person name="Lienard T."/>
            <person name="Gohl O."/>
            <person name="Martinez-Arias R."/>
            <person name="Jacobi C."/>
            <person name="Starkuviene V."/>
            <person name="Schlenczeck S."/>
            <person name="Dencker S."/>
            <person name="Huber R."/>
            <person name="Klenk H.-P."/>
            <person name="Kramer W."/>
            <person name="Merkl R."/>
            <person name="Gottschalk G."/>
            <person name="Fritz H.-J."/>
        </authorList>
    </citation>
    <scope>NUCLEOTIDE SEQUENCE [LARGE SCALE GENOMIC DNA]</scope>
    <source>
        <strain>ATCC BAA-163 / DSM 7039 / HB27</strain>
    </source>
</reference>
<reference key="3">
    <citation type="journal article" date="2017" name="Nat. Chem. Biol.">
        <title>Parallel evolution of non-homologous isofunctional enzymes in methionine biosynthesis.</title>
        <authorList>
            <person name="Bastard K."/>
            <person name="Perret A."/>
            <person name="Mariage A."/>
            <person name="Bessonnet T."/>
            <person name="Pinet-Turpault A."/>
            <person name="Petit J.L."/>
            <person name="Darii E."/>
            <person name="Bazire P."/>
            <person name="Vergne-Vaxelaire C."/>
            <person name="Brewee C."/>
            <person name="Debard A."/>
            <person name="Pellouin V."/>
            <person name="Besnard-Gonnet M."/>
            <person name="Artiguenave F."/>
            <person name="Medigue C."/>
            <person name="Vallenet D."/>
            <person name="Danchin A."/>
            <person name="Zaparucha A."/>
            <person name="Weissenbach J."/>
            <person name="Salanoubat M."/>
            <person name="de Berardinis V."/>
        </authorList>
    </citation>
    <scope>FUNCTION</scope>
    <scope>CATALYTIC ACTIVITY</scope>
</reference>
<keyword id="KW-0012">Acyltransferase</keyword>
<keyword id="KW-0028">Amino-acid biosynthesis</keyword>
<keyword id="KW-0963">Cytoplasm</keyword>
<keyword id="KW-0486">Methionine biosynthesis</keyword>
<keyword id="KW-0808">Transferase</keyword>
<feature type="chain" id="PRO_0000155744" description="Homoserine O-acetyltransferase">
    <location>
        <begin position="1"/>
        <end position="380"/>
    </location>
</feature>
<feature type="domain" description="AB hydrolase-1" evidence="1">
    <location>
        <begin position="70"/>
        <end position="366"/>
    </location>
</feature>
<feature type="active site" description="Nucleophile" evidence="1">
    <location>
        <position position="186"/>
    </location>
</feature>
<feature type="active site" evidence="1">
    <location>
        <position position="333"/>
    </location>
</feature>
<feature type="active site" evidence="1">
    <location>
        <position position="361"/>
    </location>
</feature>
<feature type="binding site" evidence="1">
    <location>
        <position position="250"/>
    </location>
    <ligand>
        <name>substrate</name>
    </ligand>
</feature>
<feature type="binding site" evidence="1">
    <location>
        <position position="362"/>
    </location>
    <ligand>
        <name>substrate</name>
    </ligand>
</feature>
<feature type="sequence conflict" description="In Ref. 1; BAA88676." evidence="6" ref="1">
    <original>TY</original>
    <variation>IH</variation>
    <location>
        <begin position="276"/>
        <end position="277"/>
    </location>
</feature>
<feature type="sequence conflict" description="In Ref. 1; BAA88676." evidence="6" ref="1">
    <original>T</original>
    <variation>N</variation>
    <location>
        <position position="303"/>
    </location>
</feature>
<protein>
    <recommendedName>
        <fullName evidence="1">Homoserine O-acetyltransferase</fullName>
        <shortName evidence="1 5">HAT</shortName>
        <ecNumber evidence="1 3">2.3.1.31</ecNumber>
    </recommendedName>
    <alternativeName>
        <fullName evidence="1">Homoserine transacetylase</fullName>
        <shortName evidence="1">HTA</shortName>
    </alternativeName>
</protein>
<organism>
    <name type="scientific">Thermus thermophilus (strain ATCC BAA-163 / DSM 7039 / HB27)</name>
    <dbReference type="NCBI Taxonomy" id="262724"/>
    <lineage>
        <taxon>Bacteria</taxon>
        <taxon>Thermotogati</taxon>
        <taxon>Deinococcota</taxon>
        <taxon>Deinococci</taxon>
        <taxon>Thermales</taxon>
        <taxon>Thermaceae</taxon>
        <taxon>Thermus</taxon>
    </lineage>
</organism>